<name>SPED_SALPA</name>
<accession>Q5PDA1</accession>
<comment type="function">
    <text evidence="1">Catalyzes the decarboxylation of S-adenosylmethionine to S-adenosylmethioninamine (dcAdoMet), the propylamine donor required for the synthesis of the polyamines spermine and spermidine from the diamine putrescine.</text>
</comment>
<comment type="catalytic activity">
    <reaction evidence="1">
        <text>S-adenosyl-L-methionine + H(+) = S-adenosyl 3-(methylsulfanyl)propylamine + CO2</text>
        <dbReference type="Rhea" id="RHEA:15981"/>
        <dbReference type="ChEBI" id="CHEBI:15378"/>
        <dbReference type="ChEBI" id="CHEBI:16526"/>
        <dbReference type="ChEBI" id="CHEBI:57443"/>
        <dbReference type="ChEBI" id="CHEBI:59789"/>
        <dbReference type="EC" id="4.1.1.50"/>
    </reaction>
</comment>
<comment type="cofactor">
    <cofactor evidence="1">
        <name>pyruvate</name>
        <dbReference type="ChEBI" id="CHEBI:15361"/>
    </cofactor>
    <text evidence="1">Binds 1 pyruvoyl group covalently per subunit.</text>
</comment>
<comment type="pathway">
    <text evidence="1">Amine and polyamine biosynthesis; S-adenosylmethioninamine biosynthesis; S-adenosylmethioninamine from S-adenosyl-L-methionine: step 1/1.</text>
</comment>
<comment type="subunit">
    <text evidence="1">Heterooctamer of four alpha and four beta chains arranged as a tetramer of alpha/beta heterodimers.</text>
</comment>
<comment type="PTM">
    <text evidence="1">Is synthesized initially as an inactive proenzyme. Formation of the active enzyme involves a self-maturation process in which the active site pyruvoyl group is generated from an internal serine residue via an autocatalytic post-translational modification. Two non-identical subunits are generated from the proenzyme in this reaction, and the pyruvate is formed at the N-terminus of the alpha chain, which is derived from the carboxyl end of the proenzyme. The post-translation cleavage follows an unusual pathway, termed non-hydrolytic serinolysis, in which the side chain hydroxyl group of the serine supplies its oxygen atom to form the C-terminus of the beta chain, while the remainder of the serine residue undergoes an oxidative deamination to produce ammonia and the pyruvoyl group blocking the N-terminus of the alpha chain.</text>
</comment>
<comment type="similarity">
    <text evidence="1">Belongs to the prokaryotic AdoMetDC family. Type 2 subfamily.</text>
</comment>
<organism>
    <name type="scientific">Salmonella paratyphi A (strain ATCC 9150 / SARB42)</name>
    <dbReference type="NCBI Taxonomy" id="295319"/>
    <lineage>
        <taxon>Bacteria</taxon>
        <taxon>Pseudomonadati</taxon>
        <taxon>Pseudomonadota</taxon>
        <taxon>Gammaproteobacteria</taxon>
        <taxon>Enterobacterales</taxon>
        <taxon>Enterobacteriaceae</taxon>
        <taxon>Salmonella</taxon>
    </lineage>
</organism>
<gene>
    <name evidence="1" type="primary">speD</name>
    <name type="ordered locus">SPA0168</name>
</gene>
<reference key="1">
    <citation type="journal article" date="2004" name="Nat. Genet.">
        <title>Comparison of genome degradation in Paratyphi A and Typhi, human-restricted serovars of Salmonella enterica that cause typhoid.</title>
        <authorList>
            <person name="McClelland M."/>
            <person name="Sanderson K.E."/>
            <person name="Clifton S.W."/>
            <person name="Latreille P."/>
            <person name="Porwollik S."/>
            <person name="Sabo A."/>
            <person name="Meyer R."/>
            <person name="Bieri T."/>
            <person name="Ozersky P."/>
            <person name="McLellan M."/>
            <person name="Harkins C.R."/>
            <person name="Wang C."/>
            <person name="Nguyen C."/>
            <person name="Berghoff A."/>
            <person name="Elliott G."/>
            <person name="Kohlberg S."/>
            <person name="Strong C."/>
            <person name="Du F."/>
            <person name="Carter J."/>
            <person name="Kremizki C."/>
            <person name="Layman D."/>
            <person name="Leonard S."/>
            <person name="Sun H."/>
            <person name="Fulton L."/>
            <person name="Nash W."/>
            <person name="Miner T."/>
            <person name="Minx P."/>
            <person name="Delehaunty K."/>
            <person name="Fronick C."/>
            <person name="Magrini V."/>
            <person name="Nhan M."/>
            <person name="Warren W."/>
            <person name="Florea L."/>
            <person name="Spieth J."/>
            <person name="Wilson R.K."/>
        </authorList>
    </citation>
    <scope>NUCLEOTIDE SEQUENCE [LARGE SCALE GENOMIC DNA]</scope>
    <source>
        <strain>ATCC 9150 / SARB42</strain>
    </source>
</reference>
<sequence>MKKLKLHGFNNLTKSLSFCIYDICYAKTAEERDGYIAYIDELYNANRLTEILSETCSIIGANILNIARQDYEPQGASVTILVSEEPVDPKLIDQTEHPGPLPETVVAHLDKSHICVHTYPESHPEGGLCTFRADIEVSTCGVISPLKALNYLIHQLESDIVTIDYRVRGFTRDVNGMKHFIDHEINSIQNFMSEDMKSLYDMVDVNVYQENIFHTKMLLKEFDLKHYMFHTKPEDLTETERQQITAALWKEMREIYYGRNISAV</sequence>
<protein>
    <recommendedName>
        <fullName evidence="1">S-adenosylmethionine decarboxylase proenzyme</fullName>
        <shortName evidence="1">AdoMetDC</shortName>
        <shortName evidence="1">SAMDC</shortName>
        <ecNumber evidence="1">4.1.1.50</ecNumber>
    </recommendedName>
    <component>
        <recommendedName>
            <fullName evidence="1">S-adenosylmethionine decarboxylase beta chain</fullName>
        </recommendedName>
    </component>
    <component>
        <recommendedName>
            <fullName evidence="1">S-adenosylmethionine decarboxylase alpha chain</fullName>
        </recommendedName>
    </component>
</protein>
<dbReference type="EC" id="4.1.1.50" evidence="1"/>
<dbReference type="EMBL" id="CP000026">
    <property type="protein sequence ID" value="AAV76201.1"/>
    <property type="molecule type" value="Genomic_DNA"/>
</dbReference>
<dbReference type="RefSeq" id="WP_000734294.1">
    <property type="nucleotide sequence ID" value="NC_006511.1"/>
</dbReference>
<dbReference type="KEGG" id="spt:SPA0168"/>
<dbReference type="HOGENOM" id="CLU_092007_0_0_6"/>
<dbReference type="UniPathway" id="UPA00331">
    <property type="reaction ID" value="UER00451"/>
</dbReference>
<dbReference type="Proteomes" id="UP000008185">
    <property type="component" value="Chromosome"/>
</dbReference>
<dbReference type="GO" id="GO:0005829">
    <property type="term" value="C:cytosol"/>
    <property type="evidence" value="ECO:0007669"/>
    <property type="project" value="TreeGrafter"/>
</dbReference>
<dbReference type="GO" id="GO:0004014">
    <property type="term" value="F:adenosylmethionine decarboxylase activity"/>
    <property type="evidence" value="ECO:0007669"/>
    <property type="project" value="UniProtKB-UniRule"/>
</dbReference>
<dbReference type="GO" id="GO:0008295">
    <property type="term" value="P:spermidine biosynthetic process"/>
    <property type="evidence" value="ECO:0007669"/>
    <property type="project" value="UniProtKB-UniRule"/>
</dbReference>
<dbReference type="FunFam" id="3.60.90.10:FF:000001">
    <property type="entry name" value="S-adenosylmethionine decarboxylase proenzyme"/>
    <property type="match status" value="1"/>
</dbReference>
<dbReference type="Gene3D" id="3.60.90.10">
    <property type="entry name" value="S-adenosylmethionine decarboxylase"/>
    <property type="match status" value="1"/>
</dbReference>
<dbReference type="HAMAP" id="MF_00465">
    <property type="entry name" value="AdoMetDC_2"/>
    <property type="match status" value="1"/>
</dbReference>
<dbReference type="InterPro" id="IPR003826">
    <property type="entry name" value="AdoMetDC_fam_prok"/>
</dbReference>
<dbReference type="InterPro" id="IPR009165">
    <property type="entry name" value="S-AdoMet_deCO2ase_bac"/>
</dbReference>
<dbReference type="InterPro" id="IPR016067">
    <property type="entry name" value="S-AdoMet_deCO2ase_core"/>
</dbReference>
<dbReference type="NCBIfam" id="TIGR03331">
    <property type="entry name" value="SAM_DCase_Eco"/>
    <property type="match status" value="1"/>
</dbReference>
<dbReference type="PANTHER" id="PTHR33866">
    <property type="entry name" value="S-ADENOSYLMETHIONINE DECARBOXYLASE PROENZYME"/>
    <property type="match status" value="1"/>
</dbReference>
<dbReference type="PANTHER" id="PTHR33866:SF1">
    <property type="entry name" value="S-ADENOSYLMETHIONINE DECARBOXYLASE PROENZYME"/>
    <property type="match status" value="1"/>
</dbReference>
<dbReference type="Pfam" id="PF02675">
    <property type="entry name" value="AdoMet_dc"/>
    <property type="match status" value="1"/>
</dbReference>
<dbReference type="PIRSF" id="PIRSF001356">
    <property type="entry name" value="SAM_decarboxylas"/>
    <property type="match status" value="1"/>
</dbReference>
<dbReference type="SUPFAM" id="SSF56276">
    <property type="entry name" value="S-adenosylmethionine decarboxylase"/>
    <property type="match status" value="1"/>
</dbReference>
<evidence type="ECO:0000255" key="1">
    <source>
        <dbReference type="HAMAP-Rule" id="MF_00465"/>
    </source>
</evidence>
<proteinExistence type="inferred from homology"/>
<keyword id="KW-0068">Autocatalytic cleavage</keyword>
<keyword id="KW-0210">Decarboxylase</keyword>
<keyword id="KW-0456">Lyase</keyword>
<keyword id="KW-0620">Polyamine biosynthesis</keyword>
<keyword id="KW-0670">Pyruvate</keyword>
<keyword id="KW-0949">S-adenosyl-L-methionine</keyword>
<keyword id="KW-0704">Schiff base</keyword>
<keyword id="KW-0745">Spermidine biosynthesis</keyword>
<keyword id="KW-0865">Zymogen</keyword>
<feature type="chain" id="PRO_0000030057" description="S-adenosylmethionine decarboxylase beta chain" evidence="1">
    <location>
        <begin position="1"/>
        <end position="111"/>
    </location>
</feature>
<feature type="chain" id="PRO_0000030058" description="S-adenosylmethionine decarboxylase alpha chain" evidence="1">
    <location>
        <begin position="112"/>
        <end position="264"/>
    </location>
</feature>
<feature type="active site" description="Schiff-base intermediate with substrate; via pyruvic acid" evidence="1">
    <location>
        <position position="112"/>
    </location>
</feature>
<feature type="active site" description="Proton acceptor; for processing activity" evidence="1">
    <location>
        <position position="117"/>
    </location>
</feature>
<feature type="active site" description="Proton donor; for catalytic activity" evidence="1">
    <location>
        <position position="140"/>
    </location>
</feature>
<feature type="site" description="Cleavage (non-hydrolytic); by autolysis" evidence="1">
    <location>
        <begin position="111"/>
        <end position="112"/>
    </location>
</feature>
<feature type="modified residue" description="Pyruvic acid (Ser); by autocatalysis" evidence="1">
    <location>
        <position position="112"/>
    </location>
</feature>